<dbReference type="EMBL" id="DQ092447">
    <property type="protein sequence ID" value="AAZ43198.1"/>
    <property type="molecule type" value="Genomic_DNA"/>
</dbReference>
<dbReference type="EMBL" id="DQ119847">
    <property type="protein sequence ID" value="AAZ23126.1"/>
    <property type="molecule type" value="mRNA"/>
</dbReference>
<dbReference type="RefSeq" id="NP_001038026.1">
    <property type="nucleotide sequence ID" value="NM_001044561.1"/>
</dbReference>
<dbReference type="SMR" id="Q2IA00"/>
<dbReference type="FunCoup" id="Q2IA00">
    <property type="interactions" value="181"/>
</dbReference>
<dbReference type="STRING" id="9823.ENSSSCP00000066091"/>
<dbReference type="GlyGen" id="Q2IA00">
    <property type="glycosylation" value="2 sites"/>
</dbReference>
<dbReference type="PaxDb" id="9823-ENSSSCP00000017830"/>
<dbReference type="GeneID" id="733620"/>
<dbReference type="KEGG" id="ssc:733620"/>
<dbReference type="CTD" id="79925"/>
<dbReference type="eggNOG" id="ENOG502QR7Y">
    <property type="taxonomic scope" value="Eukaryota"/>
</dbReference>
<dbReference type="InParanoid" id="Q2IA00"/>
<dbReference type="OrthoDB" id="62528at2759"/>
<dbReference type="ChiTaRS" id="SPEF2">
    <property type="organism name" value="pig"/>
</dbReference>
<dbReference type="Proteomes" id="UP000008227">
    <property type="component" value="Unplaced"/>
</dbReference>
<dbReference type="Proteomes" id="UP000314985">
    <property type="component" value="Unplaced"/>
</dbReference>
<dbReference type="Proteomes" id="UP000694570">
    <property type="component" value="Unplaced"/>
</dbReference>
<dbReference type="Proteomes" id="UP000694571">
    <property type="component" value="Unplaced"/>
</dbReference>
<dbReference type="Proteomes" id="UP000694720">
    <property type="component" value="Unplaced"/>
</dbReference>
<dbReference type="Proteomes" id="UP000694722">
    <property type="component" value="Unplaced"/>
</dbReference>
<dbReference type="Proteomes" id="UP000694723">
    <property type="component" value="Unplaced"/>
</dbReference>
<dbReference type="Proteomes" id="UP000694724">
    <property type="component" value="Unplaced"/>
</dbReference>
<dbReference type="Proteomes" id="UP000694725">
    <property type="component" value="Unplaced"/>
</dbReference>
<dbReference type="Proteomes" id="UP000694726">
    <property type="component" value="Unplaced"/>
</dbReference>
<dbReference type="Proteomes" id="UP000694727">
    <property type="component" value="Unplaced"/>
</dbReference>
<dbReference type="Proteomes" id="UP000694728">
    <property type="component" value="Unplaced"/>
</dbReference>
<dbReference type="GO" id="GO:0005794">
    <property type="term" value="C:Golgi apparatus"/>
    <property type="evidence" value="ECO:0007669"/>
    <property type="project" value="UniProtKB-SubCell"/>
</dbReference>
<dbReference type="GO" id="GO:0002177">
    <property type="term" value="C:manchette"/>
    <property type="evidence" value="ECO:0000318"/>
    <property type="project" value="GO_Central"/>
</dbReference>
<dbReference type="GO" id="GO:0036126">
    <property type="term" value="C:sperm flagellum"/>
    <property type="evidence" value="ECO:0000250"/>
    <property type="project" value="UniProtKB"/>
</dbReference>
<dbReference type="GO" id="GO:0097225">
    <property type="term" value="C:sperm midpiece"/>
    <property type="evidence" value="ECO:0000318"/>
    <property type="project" value="GO_Central"/>
</dbReference>
<dbReference type="GO" id="GO:0007288">
    <property type="term" value="P:sperm axoneme assembly"/>
    <property type="evidence" value="ECO:0000250"/>
    <property type="project" value="UniProtKB"/>
</dbReference>
<dbReference type="Gene3D" id="1.10.418.10">
    <property type="entry name" value="Calponin-like domain"/>
    <property type="match status" value="1"/>
</dbReference>
<dbReference type="Gene3D" id="3.40.50.300">
    <property type="entry name" value="P-loop containing nucleotide triphosphate hydrolases"/>
    <property type="match status" value="1"/>
</dbReference>
<dbReference type="InterPro" id="IPR010441">
    <property type="entry name" value="CH_2"/>
</dbReference>
<dbReference type="InterPro" id="IPR001715">
    <property type="entry name" value="CH_dom"/>
</dbReference>
<dbReference type="InterPro" id="IPR036872">
    <property type="entry name" value="CH_dom_sf"/>
</dbReference>
<dbReference type="InterPro" id="IPR011992">
    <property type="entry name" value="EF-hand-dom_pair"/>
</dbReference>
<dbReference type="InterPro" id="IPR027417">
    <property type="entry name" value="P-loop_NTPase"/>
</dbReference>
<dbReference type="InterPro" id="IPR056199">
    <property type="entry name" value="SPEF2_C"/>
</dbReference>
<dbReference type="InterPro" id="IPR054517">
    <property type="entry name" value="SPEF2_D5"/>
</dbReference>
<dbReference type="InterPro" id="IPR052634">
    <property type="entry name" value="Sperm_flagellar-bone_growth"/>
</dbReference>
<dbReference type="PANTHER" id="PTHR14919">
    <property type="entry name" value="KPL2-RELATED"/>
    <property type="match status" value="1"/>
</dbReference>
<dbReference type="PANTHER" id="PTHR14919:SF0">
    <property type="entry name" value="SPERM FLAGELLAR PROTEIN 2"/>
    <property type="match status" value="1"/>
</dbReference>
<dbReference type="Pfam" id="PF00406">
    <property type="entry name" value="ADK"/>
    <property type="match status" value="1"/>
</dbReference>
<dbReference type="Pfam" id="PF06294">
    <property type="entry name" value="CH_2"/>
    <property type="match status" value="1"/>
</dbReference>
<dbReference type="Pfam" id="PF24082">
    <property type="entry name" value="SPEF2_C"/>
    <property type="match status" value="1"/>
</dbReference>
<dbReference type="Pfam" id="PF22946">
    <property type="entry name" value="SPEF2_D5"/>
    <property type="match status" value="1"/>
</dbReference>
<dbReference type="SUPFAM" id="SSF47473">
    <property type="entry name" value="EF-hand"/>
    <property type="match status" value="1"/>
</dbReference>
<dbReference type="SUPFAM" id="SSF52540">
    <property type="entry name" value="P-loop containing nucleoside triphosphate hydrolases"/>
    <property type="match status" value="1"/>
</dbReference>
<dbReference type="PROSITE" id="PS50021">
    <property type="entry name" value="CH"/>
    <property type="match status" value="1"/>
</dbReference>
<comment type="function">
    <text evidence="1 6 8">Required for correct axoneme development in spermatozoa (PubMed:16549801, PubMed:19889948). Important for normal development of the manchette and sperm head morphology. Essential for male fertility. Plays a role in localization of the intraflagellar transport protein IFT20 to the manchette, suggesting function as an adapter for dynein-mediated protein transport during spermatogenesis. Also plays a role in bone growth where it seems to be required for normal osteoblast differentiation (By similarity).</text>
</comment>
<comment type="subunit">
    <text evidence="1">Interacts (via C-terminus) with IFT20. Interacts with DYNC1I2.</text>
</comment>
<comment type="subcellular location">
    <subcellularLocation>
        <location evidence="2">Cell projection</location>
        <location evidence="2">Cilium</location>
        <location evidence="2">Flagellum</location>
    </subcellularLocation>
    <subcellularLocation>
        <location evidence="1">Cytoplasm</location>
    </subcellularLocation>
    <subcellularLocation>
        <location evidence="1">Golgi apparatus</location>
    </subcellularLocation>
    <text evidence="1">Shows dynamic localization in developing spermatozoa. Localizes to the manchette in step 10-12 elongating spermatids. Detected in the basal body and neck area of step 13-14 spermatids. Localizes to the midpiece of the sperm tail in step 15-16 spermatids. During the epididymal transport of spermatozoa, expression in the sperm tail reduces and becomes concentrated at the distal part of the midpiece. Detected in the Golgi apparatus of late spermatocytes and round spermatids. Detected in the cytoplasm of Sertoli cells.</text>
</comment>
<comment type="tissue specificity">
    <text evidence="6">Predominantly expressed in ciliated tissues. Mainly expressed in testis, followed by trachea. Also expressed at lower level in lung, kidney and liver.</text>
</comment>
<comment type="disease">
    <text evidence="6 7 8">Defects in SPEF2 are a cause of immotile short-tail sperm defects, an autosomal recessive disease only found in the Finnish Yorkshire pig population (PubMed:16549801, PubMed:17610085, PubMed:19889948). It specifically affects the axoneme structure of sperm flagella, whereas cilia in other tissues appear unaffected (PubMed:16549801, PubMed:17610085, PubMed:19889948). Sperm flagella are short and malformed, with disorganized mitochondria and loss or disorganization of the outer fibrous sheath (PubMed:19889948).</text>
</comment>
<accession>Q2IA00</accession>
<accession>Q288C5</accession>
<organism>
    <name type="scientific">Sus scrofa</name>
    <name type="common">Pig</name>
    <dbReference type="NCBI Taxonomy" id="9823"/>
    <lineage>
        <taxon>Eukaryota</taxon>
        <taxon>Metazoa</taxon>
        <taxon>Chordata</taxon>
        <taxon>Craniata</taxon>
        <taxon>Vertebrata</taxon>
        <taxon>Euteleostomi</taxon>
        <taxon>Mammalia</taxon>
        <taxon>Eutheria</taxon>
        <taxon>Laurasiatheria</taxon>
        <taxon>Artiodactyla</taxon>
        <taxon>Suina</taxon>
        <taxon>Suidae</taxon>
        <taxon>Sus</taxon>
    </lineage>
</organism>
<name>SPEF2_PIG</name>
<keyword id="KW-0966">Cell projection</keyword>
<keyword id="KW-0969">Cilium</keyword>
<keyword id="KW-0175">Coiled coil</keyword>
<keyword id="KW-0963">Cytoplasm</keyword>
<keyword id="KW-0221">Differentiation</keyword>
<keyword id="KW-0282">Flagellum</keyword>
<keyword id="KW-0333">Golgi apparatus</keyword>
<keyword id="KW-1185">Reference proteome</keyword>
<keyword id="KW-0744">Spermatogenesis</keyword>
<feature type="chain" id="PRO_0000299031" description="Sperm flagellar protein 2">
    <location>
        <begin position="1"/>
        <end position="1812"/>
    </location>
</feature>
<feature type="domain" description="Calponin-homology (CH)" evidence="4">
    <location>
        <begin position="1"/>
        <end position="105"/>
    </location>
</feature>
<feature type="region of interest" description="Disordered" evidence="5">
    <location>
        <begin position="618"/>
        <end position="658"/>
    </location>
</feature>
<feature type="region of interest" description="Disordered" evidence="5">
    <location>
        <begin position="879"/>
        <end position="1002"/>
    </location>
</feature>
<feature type="region of interest" description="Disordered" evidence="5">
    <location>
        <begin position="1272"/>
        <end position="1322"/>
    </location>
</feature>
<feature type="region of interest" description="Interaction with IFT20" evidence="2">
    <location>
        <begin position="1317"/>
        <end position="1669"/>
    </location>
</feature>
<feature type="region of interest" description="Disordered" evidence="5">
    <location>
        <begin position="1793"/>
        <end position="1812"/>
    </location>
</feature>
<feature type="coiled-coil region" evidence="3">
    <location>
        <begin position="178"/>
        <end position="260"/>
    </location>
</feature>
<feature type="coiled-coil region" evidence="3">
    <location>
        <begin position="374"/>
        <end position="403"/>
    </location>
</feature>
<feature type="coiled-coil region" evidence="3">
    <location>
        <begin position="724"/>
        <end position="750"/>
    </location>
</feature>
<feature type="coiled-coil region" evidence="3">
    <location>
        <begin position="803"/>
        <end position="827"/>
    </location>
</feature>
<feature type="coiled-coil region" evidence="3">
    <location>
        <begin position="868"/>
        <end position="897"/>
    </location>
</feature>
<feature type="compositionally biased region" description="Basic and acidic residues" evidence="5">
    <location>
        <begin position="618"/>
        <end position="630"/>
    </location>
</feature>
<feature type="compositionally biased region" description="Basic and acidic residues" evidence="5">
    <location>
        <begin position="879"/>
        <end position="897"/>
    </location>
</feature>
<feature type="compositionally biased region" description="Pro residues" evidence="5">
    <location>
        <begin position="902"/>
        <end position="913"/>
    </location>
</feature>
<feature type="compositionally biased region" description="Basic and acidic residues" evidence="5">
    <location>
        <begin position="914"/>
        <end position="929"/>
    </location>
</feature>
<feature type="compositionally biased region" description="Basic and acidic residues" evidence="5">
    <location>
        <begin position="943"/>
        <end position="961"/>
    </location>
</feature>
<feature type="compositionally biased region" description="Basic and acidic residues" evidence="5">
    <location>
        <begin position="1272"/>
        <end position="1285"/>
    </location>
</feature>
<feature type="compositionally biased region" description="Basic residues" evidence="5">
    <location>
        <begin position="1292"/>
        <end position="1310"/>
    </location>
</feature>
<protein>
    <recommendedName>
        <fullName>Sperm flagellar protein 2</fullName>
    </recommendedName>
    <alternativeName>
        <fullName>Protein KPL2</fullName>
    </alternativeName>
</protein>
<evidence type="ECO:0000250" key="1">
    <source>
        <dbReference type="UniProtKB" id="Q8C9J3"/>
    </source>
</evidence>
<evidence type="ECO:0000250" key="2">
    <source>
        <dbReference type="UniProtKB" id="Q9C093"/>
    </source>
</evidence>
<evidence type="ECO:0000255" key="3"/>
<evidence type="ECO:0000255" key="4">
    <source>
        <dbReference type="PROSITE-ProRule" id="PRU00044"/>
    </source>
</evidence>
<evidence type="ECO:0000256" key="5">
    <source>
        <dbReference type="SAM" id="MobiDB-lite"/>
    </source>
</evidence>
<evidence type="ECO:0000269" key="6">
    <source>
    </source>
</evidence>
<evidence type="ECO:0000269" key="7">
    <source>
    </source>
</evidence>
<evidence type="ECO:0000269" key="8">
    <source>
    </source>
</evidence>
<reference key="1">
    <citation type="journal article" date="2006" name="Proc. Natl. Acad. Sci. U.S.A.">
        <title>An intronic insertion in KPL2 results in aberrant splicing and causes the immotile short-tail sperm defect in the pig.</title>
        <authorList>
            <person name="Sironen A."/>
            <person name="Thomsen B."/>
            <person name="Andersson M."/>
            <person name="Ahola V."/>
            <person name="Vilkki J."/>
        </authorList>
    </citation>
    <scope>NUCLEOTIDE SEQUENCE [MRNA]</scope>
    <scope>FUNCTION</scope>
    <scope>DISEASE</scope>
    <scope>TISSUE SPECIFICITY</scope>
</reference>
<reference key="2">
    <citation type="journal article" date="2007" name="Mol. Genet. Genomics">
        <title>Infertile Finnish Yorkshire boars carry a full-length LINE-1 retrotransposon within the KPL2 gene.</title>
        <authorList>
            <person name="Sironen A."/>
            <person name="Vilkki J."/>
            <person name="Bendixen C."/>
            <person name="Thomsen B."/>
        </authorList>
    </citation>
    <scope>DISEASE</scope>
</reference>
<reference key="3">
    <citation type="journal article" date="2010" name="Biol. Reprod.">
        <title>Expression of SPEF2 during mouse spermatogenesis and identification of IFT20 as an interacting protein.</title>
        <authorList>
            <person name="Sironen A."/>
            <person name="Hansen J."/>
            <person name="Thomsen B."/>
            <person name="Andersson M."/>
            <person name="Vilkki J."/>
            <person name="Toppari J."/>
            <person name="Kotaja N."/>
        </authorList>
    </citation>
    <scope>FUNCTION</scope>
    <scope>DISEASE</scope>
</reference>
<sequence>MSEILCHWLNQELKVSQTVSPKSFAKAFSSGYLIGEVLHKYELQDDFAEFSEKRISSAKLNNFSRLEPTLHLLGVQFDQNVAHDIITEKPGVAMKLLYQLYIALQRKKKSGLTGVELQTMQPLTNTKLQNMKSEAFRDRLRNLIPRQTDVSLMRVSHRFQEKYKYKDEDLVHTHLKKLENFQKLQEEQRSFNIEKQRLSRRRQNEIMAQIQAAIIQIPKPASNRTLKALDAQKMMKKKKEAEDVANEIKKFEALIKKDLQAKESASKTSLDAAGQTTTDLLNTYSDDEYIKKIQKRLEEDAFAREQREKRRRRLLMDQLIAHEAQEEAYREEQLVSRLMRQSQQERRIAVQLMHVRHEKEVLWQNRIFREKQYEERRLKDFQDALDREAALAKQAKIDYEEQALREKEMHEQIAAERVQARYKKHYSICAEILDQILDLSTKVADYRMLTNNLIPYKLMHDWKELFFNGMPIYEQASLKHLSAKPSTEQLIELEKRDLLDNNDYEEYKNMVGEWALPEEMVDNIPPSDNRILGHVIHRLIEHSLPPQVESTAPELPSFAIKGCLLGKTFSGKTTALKFLQKYFPIEVLSIDTLVQEAIQAFHNNEKVSGALQLQKAAEEKASPVRQESGDRSQNLHNVLSAEGTPETEDETRLSTKKTPKAEEVIASASLSELTTRAQLGAKSEKLLKKGKSISDTLLVSIVVNAINQIPIYKGWILDGFPMTLNQAKLLEEALTGFNRNLIELEGKKSQISTLAVDPTASREVPLPPSAFDFVMLLDISDNTSLNRMNDIMAEAFLSETPHENINQRVAAENQDMDEDQNLRDQIQHRIIGFWDHWPSLEQWFTEPENILIKMNAEVDEQSLCQKVKEMFMAEIMKKENKAKKKSEEKEAEKKEEFSLPEATPPTPPAPPPSEPEKEKEAHPPHERSKTPTAKGKPASEPPHGNRESPQEGKGKKSETSPKRKGSPRGKSPGGKAPVKKSPADSTDVSPVPAVPPPSKPGSEEWVFVNEPIPEEIPLFLVPYWKLIENSYINSIKTVLRHLREGQHTVLAYLYDTRTGFQQFLRRPDHKQNFVSQWQADFNSLPDDLWEDEETKAELHQRVNDLRDRLWDICDARKEEAEQERLDIINESWLQDSTGIAMNHFFSLMQAELNRFQDTKRLLQDYYRGMECKIPTDDTKRFTRIPLVQLDNKDTLEFQLRIPLVPRRSISPESALSKPKIKALLKGNIDYSLENVELNFEADEKVVMDTWQQASLAVSHMVAAEIHQRLMEEEKENQPADTKEKPPQAAANKKVKKEPPKKKREDKKGKGKSPPMAESAPVITVEEIAEMERKNELRLRIKEEHLAALQFEERATQFRLELIKTKALAFLEDLVTKAVDVYKLMEKWLGERYLNEMASVEKLTEVARYHIETSTKIQNELYLDQEDFFINGNIKVFPDPPPPVRPPPVEKEENGTLTIEQLDNLRDQFLDIAPKGVIGNKAFADILLDLVTLNLGTNNFPSSWMHLTQPELQELASLLVINSELVDWRKFLLVAALPWPIPLEEELLETLQRFKAVDEEQLGTVTFEQYLQAGLWFTGDKDIKIPANPLEPLPFNRQEHLIEFFFRLFADHDKDPPRLDYTEMLLYFACHPDGMEGVYRALSVATGSHVFQPIETPVLVAEKTSSFIDMSPTEEYPEPEDNFISEERELQEEGEEKEEDIPENANTEMISMETLLKVFRGGNEPQDTNRFASYPKTESIYSENFIKVFQDLGSKNLEPIEVAVLLKHPFIQDLIRSYPDYKIPDIKVVLQRSEHIQGSDGESSPSRLTEEKK</sequence>
<proteinExistence type="evidence at transcript level"/>
<gene>
    <name type="primary">SPEF2</name>
    <name type="synonym">KPL2</name>
</gene>